<reference key="1">
    <citation type="journal article" date="1987" name="Biol. Chem. Hoppe-Seyler">
        <title>The primary structures of the major and minor hemoglobin-components of adult Andean goose (Chloephaga melanoptera, Anatidae): the mutation Leu--&gt;Ser in position 55 of the beta-chains.</title>
        <authorList>
            <person name="Hiebl I."/>
            <person name="Braunitzer G."/>
            <person name="Schneeganss D."/>
        </authorList>
    </citation>
    <scope>PROTEIN SEQUENCE</scope>
</reference>
<keyword id="KW-0903">Direct protein sequencing</keyword>
<keyword id="KW-0349">Heme</keyword>
<keyword id="KW-0408">Iron</keyword>
<keyword id="KW-0479">Metal-binding</keyword>
<keyword id="KW-0561">Oxygen transport</keyword>
<keyword id="KW-0813">Transport</keyword>
<evidence type="ECO:0000255" key="1">
    <source>
        <dbReference type="PROSITE-ProRule" id="PRU00238"/>
    </source>
</evidence>
<organism>
    <name type="scientific">Chloephaga melanoptera</name>
    <name type="common">Andean goose</name>
    <name type="synonym">Anser melanopterus</name>
    <dbReference type="NCBI Taxonomy" id="8860"/>
    <lineage>
        <taxon>Eukaryota</taxon>
        <taxon>Metazoa</taxon>
        <taxon>Chordata</taxon>
        <taxon>Craniata</taxon>
        <taxon>Vertebrata</taxon>
        <taxon>Euteleostomi</taxon>
        <taxon>Archelosauria</taxon>
        <taxon>Archosauria</taxon>
        <taxon>Dinosauria</taxon>
        <taxon>Saurischia</taxon>
        <taxon>Theropoda</taxon>
        <taxon>Coelurosauria</taxon>
        <taxon>Aves</taxon>
        <taxon>Neognathae</taxon>
        <taxon>Galloanserae</taxon>
        <taxon>Anseriformes</taxon>
        <taxon>Anatidae</taxon>
        <taxon>Tadorninae</taxon>
        <taxon>Chloephaga</taxon>
    </lineage>
</organism>
<proteinExistence type="evidence at protein level"/>
<dbReference type="PIR" id="S00523">
    <property type="entry name" value="HAGSDA"/>
</dbReference>
<dbReference type="SMR" id="P07035"/>
<dbReference type="GO" id="GO:0072562">
    <property type="term" value="C:blood microparticle"/>
    <property type="evidence" value="ECO:0007669"/>
    <property type="project" value="TreeGrafter"/>
</dbReference>
<dbReference type="GO" id="GO:0031838">
    <property type="term" value="C:haptoglobin-hemoglobin complex"/>
    <property type="evidence" value="ECO:0007669"/>
    <property type="project" value="TreeGrafter"/>
</dbReference>
<dbReference type="GO" id="GO:0005833">
    <property type="term" value="C:hemoglobin complex"/>
    <property type="evidence" value="ECO:0007669"/>
    <property type="project" value="InterPro"/>
</dbReference>
<dbReference type="GO" id="GO:0031720">
    <property type="term" value="F:haptoglobin binding"/>
    <property type="evidence" value="ECO:0007669"/>
    <property type="project" value="TreeGrafter"/>
</dbReference>
<dbReference type="GO" id="GO:0020037">
    <property type="term" value="F:heme binding"/>
    <property type="evidence" value="ECO:0007669"/>
    <property type="project" value="InterPro"/>
</dbReference>
<dbReference type="GO" id="GO:0005506">
    <property type="term" value="F:iron ion binding"/>
    <property type="evidence" value="ECO:0007669"/>
    <property type="project" value="InterPro"/>
</dbReference>
<dbReference type="GO" id="GO:0043177">
    <property type="term" value="F:organic acid binding"/>
    <property type="evidence" value="ECO:0007669"/>
    <property type="project" value="TreeGrafter"/>
</dbReference>
<dbReference type="GO" id="GO:0019825">
    <property type="term" value="F:oxygen binding"/>
    <property type="evidence" value="ECO:0007669"/>
    <property type="project" value="InterPro"/>
</dbReference>
<dbReference type="GO" id="GO:0005344">
    <property type="term" value="F:oxygen carrier activity"/>
    <property type="evidence" value="ECO:0007669"/>
    <property type="project" value="UniProtKB-KW"/>
</dbReference>
<dbReference type="GO" id="GO:0004601">
    <property type="term" value="F:peroxidase activity"/>
    <property type="evidence" value="ECO:0007669"/>
    <property type="project" value="TreeGrafter"/>
</dbReference>
<dbReference type="GO" id="GO:0042744">
    <property type="term" value="P:hydrogen peroxide catabolic process"/>
    <property type="evidence" value="ECO:0007669"/>
    <property type="project" value="TreeGrafter"/>
</dbReference>
<dbReference type="CDD" id="cd08927">
    <property type="entry name" value="Hb-alpha-like"/>
    <property type="match status" value="1"/>
</dbReference>
<dbReference type="FunFam" id="1.10.490.10:FF:000002">
    <property type="entry name" value="Hemoglobin subunit alpha"/>
    <property type="match status" value="1"/>
</dbReference>
<dbReference type="Gene3D" id="1.10.490.10">
    <property type="entry name" value="Globins"/>
    <property type="match status" value="1"/>
</dbReference>
<dbReference type="InterPro" id="IPR000971">
    <property type="entry name" value="Globin"/>
</dbReference>
<dbReference type="InterPro" id="IPR009050">
    <property type="entry name" value="Globin-like_sf"/>
</dbReference>
<dbReference type="InterPro" id="IPR012292">
    <property type="entry name" value="Globin/Proto"/>
</dbReference>
<dbReference type="InterPro" id="IPR002338">
    <property type="entry name" value="Hemoglobin_a-typ"/>
</dbReference>
<dbReference type="InterPro" id="IPR050056">
    <property type="entry name" value="Hemoglobin_oxygen_transport"/>
</dbReference>
<dbReference type="InterPro" id="IPR002340">
    <property type="entry name" value="Hemoglobin_zeta"/>
</dbReference>
<dbReference type="PANTHER" id="PTHR11442">
    <property type="entry name" value="HEMOGLOBIN FAMILY MEMBER"/>
    <property type="match status" value="1"/>
</dbReference>
<dbReference type="PANTHER" id="PTHR11442:SF41">
    <property type="entry name" value="HEMOGLOBIN SUBUNIT ZETA"/>
    <property type="match status" value="1"/>
</dbReference>
<dbReference type="Pfam" id="PF00042">
    <property type="entry name" value="Globin"/>
    <property type="match status" value="1"/>
</dbReference>
<dbReference type="PRINTS" id="PR00612">
    <property type="entry name" value="ALPHAHAEM"/>
</dbReference>
<dbReference type="PRINTS" id="PR00816">
    <property type="entry name" value="ZETAHAEM"/>
</dbReference>
<dbReference type="SUPFAM" id="SSF46458">
    <property type="entry name" value="Globin-like"/>
    <property type="match status" value="1"/>
</dbReference>
<dbReference type="PROSITE" id="PS01033">
    <property type="entry name" value="GLOBIN"/>
    <property type="match status" value="1"/>
</dbReference>
<accession>P07035</accession>
<sequence>MLTADDKKLLTQLWEKVAGHQEEFGSEALQRMFLTYPQTKTYFPHFDLHPGSEQVRGHGKKVAAALGNAVKSLDNLSQALSELSNLHAYNLRVDPANFKLLAQCFQVVLATHLGKDYSPEMHAAFDKFLSAVAAVLAEKYR</sequence>
<feature type="chain" id="PRO_0000052823" description="Hemoglobin subunit alpha-D">
    <location>
        <begin position="1"/>
        <end position="141"/>
    </location>
</feature>
<feature type="domain" description="Globin" evidence="1">
    <location>
        <begin position="1"/>
        <end position="141"/>
    </location>
</feature>
<feature type="binding site" description="distal binding residue">
    <location>
        <position position="58"/>
    </location>
    <ligand>
        <name>heme b</name>
        <dbReference type="ChEBI" id="CHEBI:60344"/>
    </ligand>
    <ligandPart>
        <name>Fe</name>
        <dbReference type="ChEBI" id="CHEBI:18248"/>
    </ligandPart>
</feature>
<feature type="binding site" description="proximal binding residue">
    <location>
        <position position="87"/>
    </location>
    <ligand>
        <name>heme b</name>
        <dbReference type="ChEBI" id="CHEBI:60344"/>
    </ligand>
    <ligandPart>
        <name>Fe</name>
        <dbReference type="ChEBI" id="CHEBI:18248"/>
    </ligandPart>
</feature>
<gene>
    <name type="primary">HBAD</name>
</gene>
<name>HBAD_CHLME</name>
<protein>
    <recommendedName>
        <fullName>Hemoglobin subunit alpha-D</fullName>
    </recommendedName>
    <alternativeName>
        <fullName>Alpha-D-globin</fullName>
    </alternativeName>
    <alternativeName>
        <fullName>Hemoglobin alpha-D chain</fullName>
    </alternativeName>
</protein>
<comment type="function">
    <text>Involved in oxygen transport from the lung to the various peripheral tissues.</text>
</comment>
<comment type="subunit">
    <text>Heterotetramer of two alpha-D chains and two beta chains.</text>
</comment>
<comment type="tissue specificity">
    <text>Red blood cells.</text>
</comment>
<comment type="developmental stage">
    <text>In birds, the alpha-D chain occurs in a minor hemoglobin component, called hemoglobin d, which is expressed in late embryonic and adult life.</text>
</comment>
<comment type="similarity">
    <text evidence="1">Belongs to the globin family.</text>
</comment>